<proteinExistence type="evidence at protein level"/>
<gene>
    <name type="primary">Mfrp</name>
</gene>
<accession>Q8K480</accession>
<accession>Q8BPP4</accession>
<evidence type="ECO:0000250" key="1"/>
<evidence type="ECO:0000255" key="2"/>
<evidence type="ECO:0000255" key="3">
    <source>
        <dbReference type="PROSITE-ProRule" id="PRU00059"/>
    </source>
</evidence>
<evidence type="ECO:0000255" key="4">
    <source>
        <dbReference type="PROSITE-ProRule" id="PRU00090"/>
    </source>
</evidence>
<evidence type="ECO:0000255" key="5">
    <source>
        <dbReference type="PROSITE-ProRule" id="PRU00124"/>
    </source>
</evidence>
<evidence type="ECO:0000256" key="6">
    <source>
        <dbReference type="SAM" id="MobiDB-lite"/>
    </source>
</evidence>
<evidence type="ECO:0000269" key="7">
    <source>
    </source>
</evidence>
<evidence type="ECO:0000269" key="8">
    <source>
    </source>
</evidence>
<evidence type="ECO:0000303" key="9">
    <source>
    </source>
</evidence>
<evidence type="ECO:0000305" key="10"/>
<dbReference type="EMBL" id="AF469650">
    <property type="protein sequence ID" value="AAM89216.1"/>
    <property type="molecule type" value="mRNA"/>
</dbReference>
<dbReference type="EMBL" id="AK053629">
    <property type="protein sequence ID" value="BAC35452.1"/>
    <property type="molecule type" value="mRNA"/>
</dbReference>
<dbReference type="CCDS" id="CCDS40597.1">
    <molecule id="Q8K480-1"/>
</dbReference>
<dbReference type="CCDS" id="CCDS52776.1">
    <molecule id="Q8K480-2"/>
</dbReference>
<dbReference type="RefSeq" id="NP_001177242.1">
    <property type="nucleotide sequence ID" value="NM_001190313.1"/>
</dbReference>
<dbReference type="RefSeq" id="NP_001177243.1">
    <molecule id="Q8K480-2"/>
    <property type="nucleotide sequence ID" value="NM_001190314.1"/>
</dbReference>
<dbReference type="RefSeq" id="NP_663588.2">
    <property type="nucleotide sequence ID" value="NM_145613.4"/>
</dbReference>
<dbReference type="RefSeq" id="NP_667337.1">
    <molecule id="Q8K480-1"/>
    <property type="nucleotide sequence ID" value="NM_147126.3"/>
</dbReference>
<dbReference type="SMR" id="Q8K480"/>
<dbReference type="FunCoup" id="Q8K480">
    <property type="interactions" value="3"/>
</dbReference>
<dbReference type="IntAct" id="Q8K480">
    <property type="interactions" value="1"/>
</dbReference>
<dbReference type="MINT" id="Q8K480"/>
<dbReference type="STRING" id="10090.ENSMUSP00000034654"/>
<dbReference type="GlyCosmos" id="Q8K480">
    <property type="glycosylation" value="3 sites, No reported glycans"/>
</dbReference>
<dbReference type="GlyGen" id="Q8K480">
    <property type="glycosylation" value="5 sites, 2 N-linked glycans (3 sites)"/>
</dbReference>
<dbReference type="iPTMnet" id="Q8K480"/>
<dbReference type="PhosphoSitePlus" id="Q8K480"/>
<dbReference type="PaxDb" id="10090-ENSMUSP00000034654"/>
<dbReference type="PeptideAtlas" id="Q8K480"/>
<dbReference type="ProteomicsDB" id="293462">
    <molecule id="Q8K480-1"/>
</dbReference>
<dbReference type="ProteomicsDB" id="293463">
    <molecule id="Q8K480-2"/>
</dbReference>
<dbReference type="Antibodypedia" id="32688">
    <property type="antibodies" value="113 antibodies from 18 providers"/>
</dbReference>
<dbReference type="DNASU" id="259172"/>
<dbReference type="Ensembl" id="ENSMUST00000034654.9">
    <molecule id="Q8K480-1"/>
    <property type="protein sequence ID" value="ENSMUSP00000034654.8"/>
    <property type="gene ID" value="ENSMUSG00000034739.18"/>
</dbReference>
<dbReference type="Ensembl" id="ENSMUST00000161381.8">
    <molecule id="Q8K480-2"/>
    <property type="protein sequence ID" value="ENSMUSP00000124456.2"/>
    <property type="gene ID" value="ENSMUSG00000034739.18"/>
</dbReference>
<dbReference type="GeneID" id="235312"/>
<dbReference type="GeneID" id="259172"/>
<dbReference type="KEGG" id="mmu:259172"/>
<dbReference type="UCSC" id="uc009pbr.2">
    <molecule id="Q8K480-1"/>
    <property type="organism name" value="mouse"/>
</dbReference>
<dbReference type="UCSC" id="uc012grq.1">
    <molecule id="Q8K480-2"/>
    <property type="organism name" value="mouse"/>
</dbReference>
<dbReference type="AGR" id="MGI:2385957"/>
<dbReference type="CTD" id="114902"/>
<dbReference type="CTD" id="83552"/>
<dbReference type="MGI" id="MGI:2385957">
    <property type="gene designation" value="Mfrp"/>
</dbReference>
<dbReference type="VEuPathDB" id="HostDB:ENSMUSG00000034739"/>
<dbReference type="eggNOG" id="KOG3577">
    <property type="taxonomic scope" value="Eukaryota"/>
</dbReference>
<dbReference type="eggNOG" id="KOG4292">
    <property type="taxonomic scope" value="Eukaryota"/>
</dbReference>
<dbReference type="GeneTree" id="ENSGT00940000154525"/>
<dbReference type="HOGENOM" id="CLU_032137_0_0_1"/>
<dbReference type="InParanoid" id="Q8K480"/>
<dbReference type="OMA" id="WMCDLWR"/>
<dbReference type="OrthoDB" id="9991628at2759"/>
<dbReference type="PhylomeDB" id="Q8K480"/>
<dbReference type="TreeFam" id="TF316506"/>
<dbReference type="BioGRID-ORCS" id="235312">
    <property type="hits" value="1 hit in 44 CRISPR screens"/>
</dbReference>
<dbReference type="BioGRID-ORCS" id="259172">
    <property type="hits" value="4 hits in 79 CRISPR screens"/>
</dbReference>
<dbReference type="ChiTaRS" id="C1qtnf5">
    <property type="organism name" value="mouse"/>
</dbReference>
<dbReference type="PRO" id="PR:Q8K480"/>
<dbReference type="Proteomes" id="UP000000589">
    <property type="component" value="Chromosome 9"/>
</dbReference>
<dbReference type="RNAct" id="Q8K480">
    <property type="molecule type" value="protein"/>
</dbReference>
<dbReference type="Bgee" id="ENSMUSG00000034739">
    <property type="expression patterns" value="Expressed in secondary oocyte and 39 other cell types or tissues"/>
</dbReference>
<dbReference type="ExpressionAtlas" id="Q8K480">
    <property type="expression patterns" value="baseline and differential"/>
</dbReference>
<dbReference type="GO" id="GO:0016324">
    <property type="term" value="C:apical plasma membrane"/>
    <property type="evidence" value="ECO:0007669"/>
    <property type="project" value="UniProtKB-SubCell"/>
</dbReference>
<dbReference type="GO" id="GO:0042462">
    <property type="term" value="P:eye photoreceptor cell development"/>
    <property type="evidence" value="ECO:0000315"/>
    <property type="project" value="MGI"/>
</dbReference>
<dbReference type="GO" id="GO:0060041">
    <property type="term" value="P:retina development in camera-type eye"/>
    <property type="evidence" value="ECO:0000315"/>
    <property type="project" value="MGI"/>
</dbReference>
<dbReference type="GO" id="GO:0007601">
    <property type="term" value="P:visual perception"/>
    <property type="evidence" value="ECO:0000315"/>
    <property type="project" value="MGI"/>
</dbReference>
<dbReference type="CDD" id="cd07066">
    <property type="entry name" value="CRD_FZ"/>
    <property type="match status" value="1"/>
</dbReference>
<dbReference type="CDD" id="cd00041">
    <property type="entry name" value="CUB"/>
    <property type="match status" value="2"/>
</dbReference>
<dbReference type="CDD" id="cd00112">
    <property type="entry name" value="LDLa"/>
    <property type="match status" value="1"/>
</dbReference>
<dbReference type="FunFam" id="2.60.120.290:FF:000013">
    <property type="entry name" value="Membrane frizzled-related protein"/>
    <property type="match status" value="2"/>
</dbReference>
<dbReference type="FunFam" id="1.10.2000.10:FF:000015">
    <property type="entry name" value="membrane frizzled-related protein"/>
    <property type="match status" value="1"/>
</dbReference>
<dbReference type="FunFam" id="4.10.400.10:FF:000067">
    <property type="entry name" value="Serine peptidase inhibitor, Kunitz type 1"/>
    <property type="match status" value="1"/>
</dbReference>
<dbReference type="Gene3D" id="1.10.2000.10">
    <property type="entry name" value="Frizzled cysteine-rich domain"/>
    <property type="match status" value="1"/>
</dbReference>
<dbReference type="Gene3D" id="4.10.400.10">
    <property type="entry name" value="Low-density Lipoprotein Receptor"/>
    <property type="match status" value="1"/>
</dbReference>
<dbReference type="Gene3D" id="2.60.120.290">
    <property type="entry name" value="Spermadhesin, CUB domain"/>
    <property type="match status" value="2"/>
</dbReference>
<dbReference type="InterPro" id="IPR000859">
    <property type="entry name" value="CUB_dom"/>
</dbReference>
<dbReference type="InterPro" id="IPR020067">
    <property type="entry name" value="Frizzled_dom"/>
</dbReference>
<dbReference type="InterPro" id="IPR036790">
    <property type="entry name" value="Frizzled_dom_sf"/>
</dbReference>
<dbReference type="InterPro" id="IPR036055">
    <property type="entry name" value="LDL_receptor-like_sf"/>
</dbReference>
<dbReference type="InterPro" id="IPR023415">
    <property type="entry name" value="LDLR_class-A_CS"/>
</dbReference>
<dbReference type="InterPro" id="IPR002172">
    <property type="entry name" value="LDrepeatLR_classA_rpt"/>
</dbReference>
<dbReference type="InterPro" id="IPR035914">
    <property type="entry name" value="Sperma_CUB_dom_sf"/>
</dbReference>
<dbReference type="PANTHER" id="PTHR24251:SF37">
    <property type="entry name" value="CUB DOMAIN-CONTAINING PROTEIN"/>
    <property type="match status" value="1"/>
</dbReference>
<dbReference type="PANTHER" id="PTHR24251">
    <property type="entry name" value="OVOCHYMASE-RELATED"/>
    <property type="match status" value="1"/>
</dbReference>
<dbReference type="Pfam" id="PF00431">
    <property type="entry name" value="CUB"/>
    <property type="match status" value="2"/>
</dbReference>
<dbReference type="Pfam" id="PF01392">
    <property type="entry name" value="Fz"/>
    <property type="match status" value="1"/>
</dbReference>
<dbReference type="Pfam" id="PF00057">
    <property type="entry name" value="Ldl_recept_a"/>
    <property type="match status" value="1"/>
</dbReference>
<dbReference type="SMART" id="SM00042">
    <property type="entry name" value="CUB"/>
    <property type="match status" value="2"/>
</dbReference>
<dbReference type="SMART" id="SM00063">
    <property type="entry name" value="FRI"/>
    <property type="match status" value="1"/>
</dbReference>
<dbReference type="SMART" id="SM00192">
    <property type="entry name" value="LDLa"/>
    <property type="match status" value="1"/>
</dbReference>
<dbReference type="SUPFAM" id="SSF63501">
    <property type="entry name" value="Frizzled cysteine-rich domain"/>
    <property type="match status" value="1"/>
</dbReference>
<dbReference type="SUPFAM" id="SSF57424">
    <property type="entry name" value="LDL receptor-like module"/>
    <property type="match status" value="1"/>
</dbReference>
<dbReference type="SUPFAM" id="SSF49854">
    <property type="entry name" value="Spermadhesin, CUB domain"/>
    <property type="match status" value="2"/>
</dbReference>
<dbReference type="PROSITE" id="PS01180">
    <property type="entry name" value="CUB"/>
    <property type="match status" value="2"/>
</dbReference>
<dbReference type="PROSITE" id="PS50038">
    <property type="entry name" value="FZ"/>
    <property type="match status" value="1"/>
</dbReference>
<dbReference type="PROSITE" id="PS01209">
    <property type="entry name" value="LDLRA_1"/>
    <property type="match status" value="1"/>
</dbReference>
<dbReference type="PROSITE" id="PS50068">
    <property type="entry name" value="LDLRA_2"/>
    <property type="match status" value="1"/>
</dbReference>
<comment type="function">
    <text>May play a role in eye development.</text>
</comment>
<comment type="subunit">
    <text evidence="8">Interacts with C1QTNF5.</text>
</comment>
<comment type="interaction">
    <interactant intactId="EBI-29374967">
        <id>Q8K480</id>
    </interactant>
    <interactant intactId="EBI-29374993">
        <id>Q8K479</id>
        <label>C1qtnf5</label>
    </interactant>
    <organismsDiffer>false</organismsDiffer>
    <experiments>5</experiments>
</comment>
<comment type="subcellular location">
    <subcellularLocation>
        <location evidence="8">Apical cell membrane</location>
        <topology evidence="8">Single-pass type II membrane protein</topology>
    </subcellularLocation>
</comment>
<comment type="alternative products">
    <event type="alternative splicing"/>
    <isoform>
        <id>Q8K480-1</id>
        <name>1</name>
        <sequence type="displayed"/>
    </isoform>
    <isoform>
        <id>Q8K480-2</id>
        <name>2</name>
        <sequence type="described" ref="VSP_017664"/>
    </isoform>
</comment>
<comment type="tissue specificity">
    <text evidence="7 8">Expressed in retinal pigment epithelium and ciliary epithelium of the eye.</text>
</comment>
<comment type="disease">
    <text evidence="7">Defects in Mfrp are the cause of retinal degeneration 6 (RD6). RD6 is an autosomal recessive degeneration of the photoreceptors causing dysfunction of both rods and cones.</text>
</comment>
<protein>
    <recommendedName>
        <fullName>Membrane frizzled-related protein</fullName>
    </recommendedName>
    <alternativeName>
        <fullName>Membrane-type frizzled-related protein</fullName>
    </alternativeName>
</protein>
<sequence>MKDYDDVILRPEASELSKTEFCNPAFDPEAGPSCPPPALQRDVGSRLQAPWHAQRLRGLQPDCHFSWFCILLLSGLLLLLLGLLVAVILAQLQATSLPRTTKNPLLTRGLTPMGVIPSTTPNTTTTTTTTTPARTGQQEAAMSPTHQTTCGGLLPGPSGFFSSPNYPDLYPPLSHCVWHIQVAAGQTIQLKIQALSIESMLTCLFDRLEIISEPTGPLLRVCGKTPPATLNTNTSHLRVSFVSDNDVEGSGFQAWYQAVAPGHWSCAHNEFHCDLLLCLKRDSVCDGITECADGSDEANCSAKTLGCGGNLTGLYGVFSTPNYPQHYPHQQLCTWYIEVPVGYGIRLEFHNFSLEAQAECKFDYVEVYEASNLGTFSFLGRFCGAEPPLNVVSSMHQLAVIFKTDLGISSGGFLATYQAINTTESGCPWAEFCQSGGYRDLQWMCDLWKDCANDSNDNCSSHLSPQPDLTCEPVQVEMCLGLSYNTTAFPNIWVGLATQTEVTDILRGYKSLTSLPCYQTFQRFLCGLLVPRCTSLGTILPPCRSVCQAAEQQCQSSLALLGTPWPFNCNRLPVAASLEACSQP</sequence>
<name>MFRP_MOUSE</name>
<reference key="1">
    <citation type="journal article" date="2002" name="Hum. Mol. Genet.">
        <title>Mfrp, a gene encoding a frizzled related protein, is mutated in the mouse retinal degeneration 6.</title>
        <authorList>
            <person name="Kameya S."/>
            <person name="Hawes N.L."/>
            <person name="Chang B."/>
            <person name="Heckenlively J.R."/>
            <person name="Naggert J.K."/>
            <person name="Nishina P.M."/>
        </authorList>
    </citation>
    <scope>NUCLEOTIDE SEQUENCE [MRNA] (ISOFORM 1)</scope>
    <scope>TISSUE SPECIFICITY</scope>
    <scope>INVOLVEMENT IN RD6</scope>
    <source>
        <strain>C57BL/6J</strain>
        <tissue>Eye</tissue>
    </source>
</reference>
<reference key="2">
    <citation type="journal article" date="2005" name="Science">
        <title>The transcriptional landscape of the mammalian genome.</title>
        <authorList>
            <person name="Carninci P."/>
            <person name="Kasukawa T."/>
            <person name="Katayama S."/>
            <person name="Gough J."/>
            <person name="Frith M.C."/>
            <person name="Maeda N."/>
            <person name="Oyama R."/>
            <person name="Ravasi T."/>
            <person name="Lenhard B."/>
            <person name="Wells C."/>
            <person name="Kodzius R."/>
            <person name="Shimokawa K."/>
            <person name="Bajic V.B."/>
            <person name="Brenner S.E."/>
            <person name="Batalov S."/>
            <person name="Forrest A.R."/>
            <person name="Zavolan M."/>
            <person name="Davis M.J."/>
            <person name="Wilming L.G."/>
            <person name="Aidinis V."/>
            <person name="Allen J.E."/>
            <person name="Ambesi-Impiombato A."/>
            <person name="Apweiler R."/>
            <person name="Aturaliya R.N."/>
            <person name="Bailey T.L."/>
            <person name="Bansal M."/>
            <person name="Baxter L."/>
            <person name="Beisel K.W."/>
            <person name="Bersano T."/>
            <person name="Bono H."/>
            <person name="Chalk A.M."/>
            <person name="Chiu K.P."/>
            <person name="Choudhary V."/>
            <person name="Christoffels A."/>
            <person name="Clutterbuck D.R."/>
            <person name="Crowe M.L."/>
            <person name="Dalla E."/>
            <person name="Dalrymple B.P."/>
            <person name="de Bono B."/>
            <person name="Della Gatta G."/>
            <person name="di Bernardo D."/>
            <person name="Down T."/>
            <person name="Engstrom P."/>
            <person name="Fagiolini M."/>
            <person name="Faulkner G."/>
            <person name="Fletcher C.F."/>
            <person name="Fukushima T."/>
            <person name="Furuno M."/>
            <person name="Futaki S."/>
            <person name="Gariboldi M."/>
            <person name="Georgii-Hemming P."/>
            <person name="Gingeras T.R."/>
            <person name="Gojobori T."/>
            <person name="Green R.E."/>
            <person name="Gustincich S."/>
            <person name="Harbers M."/>
            <person name="Hayashi Y."/>
            <person name="Hensch T.K."/>
            <person name="Hirokawa N."/>
            <person name="Hill D."/>
            <person name="Huminiecki L."/>
            <person name="Iacono M."/>
            <person name="Ikeo K."/>
            <person name="Iwama A."/>
            <person name="Ishikawa T."/>
            <person name="Jakt M."/>
            <person name="Kanapin A."/>
            <person name="Katoh M."/>
            <person name="Kawasawa Y."/>
            <person name="Kelso J."/>
            <person name="Kitamura H."/>
            <person name="Kitano H."/>
            <person name="Kollias G."/>
            <person name="Krishnan S.P."/>
            <person name="Kruger A."/>
            <person name="Kummerfeld S.K."/>
            <person name="Kurochkin I.V."/>
            <person name="Lareau L.F."/>
            <person name="Lazarevic D."/>
            <person name="Lipovich L."/>
            <person name="Liu J."/>
            <person name="Liuni S."/>
            <person name="McWilliam S."/>
            <person name="Madan Babu M."/>
            <person name="Madera M."/>
            <person name="Marchionni L."/>
            <person name="Matsuda H."/>
            <person name="Matsuzawa S."/>
            <person name="Miki H."/>
            <person name="Mignone F."/>
            <person name="Miyake S."/>
            <person name="Morris K."/>
            <person name="Mottagui-Tabar S."/>
            <person name="Mulder N."/>
            <person name="Nakano N."/>
            <person name="Nakauchi H."/>
            <person name="Ng P."/>
            <person name="Nilsson R."/>
            <person name="Nishiguchi S."/>
            <person name="Nishikawa S."/>
            <person name="Nori F."/>
            <person name="Ohara O."/>
            <person name="Okazaki Y."/>
            <person name="Orlando V."/>
            <person name="Pang K.C."/>
            <person name="Pavan W.J."/>
            <person name="Pavesi G."/>
            <person name="Pesole G."/>
            <person name="Petrovsky N."/>
            <person name="Piazza S."/>
            <person name="Reed J."/>
            <person name="Reid J.F."/>
            <person name="Ring B.Z."/>
            <person name="Ringwald M."/>
            <person name="Rost B."/>
            <person name="Ruan Y."/>
            <person name="Salzberg S.L."/>
            <person name="Sandelin A."/>
            <person name="Schneider C."/>
            <person name="Schoenbach C."/>
            <person name="Sekiguchi K."/>
            <person name="Semple C.A."/>
            <person name="Seno S."/>
            <person name="Sessa L."/>
            <person name="Sheng Y."/>
            <person name="Shibata Y."/>
            <person name="Shimada H."/>
            <person name="Shimada K."/>
            <person name="Silva D."/>
            <person name="Sinclair B."/>
            <person name="Sperling S."/>
            <person name="Stupka E."/>
            <person name="Sugiura K."/>
            <person name="Sultana R."/>
            <person name="Takenaka Y."/>
            <person name="Taki K."/>
            <person name="Tammoja K."/>
            <person name="Tan S.L."/>
            <person name="Tang S."/>
            <person name="Taylor M.S."/>
            <person name="Tegner J."/>
            <person name="Teichmann S.A."/>
            <person name="Ueda H.R."/>
            <person name="van Nimwegen E."/>
            <person name="Verardo R."/>
            <person name="Wei C.L."/>
            <person name="Yagi K."/>
            <person name="Yamanishi H."/>
            <person name="Zabarovsky E."/>
            <person name="Zhu S."/>
            <person name="Zimmer A."/>
            <person name="Hide W."/>
            <person name="Bult C."/>
            <person name="Grimmond S.M."/>
            <person name="Teasdale R.D."/>
            <person name="Liu E.T."/>
            <person name="Brusic V."/>
            <person name="Quackenbush J."/>
            <person name="Wahlestedt C."/>
            <person name="Mattick J.S."/>
            <person name="Hume D.A."/>
            <person name="Kai C."/>
            <person name="Sasaki D."/>
            <person name="Tomaru Y."/>
            <person name="Fukuda S."/>
            <person name="Kanamori-Katayama M."/>
            <person name="Suzuki M."/>
            <person name="Aoki J."/>
            <person name="Arakawa T."/>
            <person name="Iida J."/>
            <person name="Imamura K."/>
            <person name="Itoh M."/>
            <person name="Kato T."/>
            <person name="Kawaji H."/>
            <person name="Kawagashira N."/>
            <person name="Kawashima T."/>
            <person name="Kojima M."/>
            <person name="Kondo S."/>
            <person name="Konno H."/>
            <person name="Nakano K."/>
            <person name="Ninomiya N."/>
            <person name="Nishio T."/>
            <person name="Okada M."/>
            <person name="Plessy C."/>
            <person name="Shibata K."/>
            <person name="Shiraki T."/>
            <person name="Suzuki S."/>
            <person name="Tagami M."/>
            <person name="Waki K."/>
            <person name="Watahiki A."/>
            <person name="Okamura-Oho Y."/>
            <person name="Suzuki H."/>
            <person name="Kawai J."/>
            <person name="Hayashizaki Y."/>
        </authorList>
    </citation>
    <scope>NUCLEOTIDE SEQUENCE [LARGE SCALE MRNA] (ISOFORM 2)</scope>
    <source>
        <strain>C57BL/6J</strain>
        <tissue>Eye</tissue>
    </source>
</reference>
<reference key="3">
    <citation type="journal article" date="2006" name="Invest. Ophthalmol. Vis. Sci.">
        <title>Spatial and temporal expression of MFRP and its interaction with CTRP5.</title>
        <authorList>
            <person name="Mandal M.N."/>
            <person name="Vasireddy V."/>
            <person name="Jablonski M.M."/>
            <person name="Wang X."/>
            <person name="Heckenlively J.R."/>
            <person name="Hughes B.A."/>
            <person name="Reddy G.B."/>
            <person name="Ayyagari R."/>
        </authorList>
    </citation>
    <scope>SUBCELLULAR LOCATION</scope>
    <scope>TISSUE SPECIFICITY</scope>
    <scope>INTERACTION WITH C1QTNF5</scope>
</reference>
<keyword id="KW-0025">Alternative splicing</keyword>
<keyword id="KW-1003">Cell membrane</keyword>
<keyword id="KW-1015">Disulfide bond</keyword>
<keyword id="KW-0325">Glycoprotein</keyword>
<keyword id="KW-0472">Membrane</keyword>
<keyword id="KW-1185">Reference proteome</keyword>
<keyword id="KW-0677">Repeat</keyword>
<keyword id="KW-0735">Signal-anchor</keyword>
<keyword id="KW-0812">Transmembrane</keyword>
<keyword id="KW-1133">Transmembrane helix</keyword>
<feature type="chain" id="PRO_0000228133" description="Membrane frizzled-related protein">
    <location>
        <begin position="1"/>
        <end position="584"/>
    </location>
</feature>
<feature type="topological domain" description="Cytoplasmic" evidence="2">
    <location>
        <begin position="1"/>
        <end position="69"/>
    </location>
</feature>
<feature type="transmembrane region" description="Helical; Signal-anchor for type II membrane protein" evidence="2">
    <location>
        <begin position="70"/>
        <end position="90"/>
    </location>
</feature>
<feature type="topological domain" description="Extracellular" evidence="2">
    <location>
        <begin position="91"/>
        <end position="584"/>
    </location>
</feature>
<feature type="domain" description="CUB 1" evidence="3">
    <location>
        <begin position="150"/>
        <end position="259"/>
    </location>
</feature>
<feature type="domain" description="LDL-receptor class A 1" evidence="5">
    <location>
        <begin position="265"/>
        <end position="301"/>
    </location>
</feature>
<feature type="domain" description="CUB 2" evidence="3">
    <location>
        <begin position="307"/>
        <end position="420"/>
    </location>
</feature>
<feature type="domain" description="LDL-receptor class A 2" evidence="5">
    <location>
        <begin position="426"/>
        <end position="460"/>
    </location>
</feature>
<feature type="domain" description="FZ" evidence="4">
    <location>
        <begin position="466"/>
        <end position="584"/>
    </location>
</feature>
<feature type="region of interest" description="Disordered" evidence="6">
    <location>
        <begin position="108"/>
        <end position="140"/>
    </location>
</feature>
<feature type="compositionally biased region" description="Low complexity" evidence="6">
    <location>
        <begin position="119"/>
        <end position="132"/>
    </location>
</feature>
<feature type="glycosylation site" description="N-linked (GlcNAc...) asparagine" evidence="2">
    <location>
        <position position="233"/>
    </location>
</feature>
<feature type="glycosylation site" description="N-linked (GlcNAc...) asparagine" evidence="2">
    <location>
        <position position="421"/>
    </location>
</feature>
<feature type="glycosylation site" description="N-linked (GlcNAc...) asparagine" evidence="2">
    <location>
        <position position="458"/>
    </location>
</feature>
<feature type="disulfide bond" evidence="1">
    <location>
        <begin position="150"/>
        <end position="176"/>
    </location>
</feature>
<feature type="disulfide bond" evidence="1">
    <location>
        <begin position="203"/>
        <end position="222"/>
    </location>
</feature>
<feature type="disulfide bond" evidence="1">
    <location>
        <begin position="266"/>
        <end position="278"/>
    </location>
</feature>
<feature type="disulfide bond" evidence="1">
    <location>
        <begin position="273"/>
        <end position="291"/>
    </location>
</feature>
<feature type="disulfide bond" evidence="1">
    <location>
        <begin position="285"/>
        <end position="300"/>
    </location>
</feature>
<feature type="disulfide bond" evidence="1">
    <location>
        <begin position="307"/>
        <end position="333"/>
    </location>
</feature>
<feature type="disulfide bond" evidence="1">
    <location>
        <begin position="360"/>
        <end position="383"/>
    </location>
</feature>
<feature type="disulfide bond" evidence="1">
    <location>
        <begin position="433"/>
        <end position="451"/>
    </location>
</feature>
<feature type="disulfide bond" evidence="1">
    <location>
        <begin position="445"/>
        <end position="459"/>
    </location>
</feature>
<feature type="disulfide bond" evidence="1">
    <location>
        <begin position="471"/>
        <end position="533"/>
    </location>
</feature>
<feature type="disulfide bond" evidence="1">
    <location>
        <begin position="479"/>
        <end position="526"/>
    </location>
</feature>
<feature type="disulfide bond" evidence="1">
    <location>
        <begin position="517"/>
        <end position="554"/>
    </location>
</feature>
<feature type="disulfide bond" evidence="1">
    <location>
        <begin position="543"/>
        <end position="581"/>
    </location>
</feature>
<feature type="disulfide bond" evidence="1">
    <location>
        <begin position="547"/>
        <end position="569"/>
    </location>
</feature>
<feature type="splice variant" id="VSP_017664" description="In isoform 2." evidence="9">
    <original>SGCPWAE</original>
    <variation>K</variation>
    <location>
        <begin position="425"/>
        <end position="431"/>
    </location>
</feature>
<feature type="sequence conflict" description="In Ref. 2; BAC35452." evidence="10" ref="2">
    <original>P</original>
    <variation>H</variation>
    <location>
        <position position="98"/>
    </location>
</feature>
<organism>
    <name type="scientific">Mus musculus</name>
    <name type="common">Mouse</name>
    <dbReference type="NCBI Taxonomy" id="10090"/>
    <lineage>
        <taxon>Eukaryota</taxon>
        <taxon>Metazoa</taxon>
        <taxon>Chordata</taxon>
        <taxon>Craniata</taxon>
        <taxon>Vertebrata</taxon>
        <taxon>Euteleostomi</taxon>
        <taxon>Mammalia</taxon>
        <taxon>Eutheria</taxon>
        <taxon>Euarchontoglires</taxon>
        <taxon>Glires</taxon>
        <taxon>Rodentia</taxon>
        <taxon>Myomorpha</taxon>
        <taxon>Muroidea</taxon>
        <taxon>Muridae</taxon>
        <taxon>Murinae</taxon>
        <taxon>Mus</taxon>
        <taxon>Mus</taxon>
    </lineage>
</organism>